<keyword id="KW-0687">Ribonucleoprotein</keyword>
<keyword id="KW-0689">Ribosomal protein</keyword>
<proteinExistence type="inferred from homology"/>
<accession>B0UVI0</accession>
<reference key="1">
    <citation type="submission" date="2008-02" db="EMBL/GenBank/DDBJ databases">
        <title>Complete sequence of Haemophilus somnus 2336.</title>
        <authorList>
            <consortium name="US DOE Joint Genome Institute"/>
            <person name="Siddaramappa S."/>
            <person name="Duncan A.J."/>
            <person name="Challacombe J.F."/>
            <person name="Rainey D."/>
            <person name="Gillaspy A.F."/>
            <person name="Carson M."/>
            <person name="Gipson J."/>
            <person name="Gipson M."/>
            <person name="Bruce D."/>
            <person name="Detter J.C."/>
            <person name="Han C.S."/>
            <person name="Land M."/>
            <person name="Tapia R."/>
            <person name="Thompson L.S."/>
            <person name="Orvis J."/>
            <person name="Zaitshik J."/>
            <person name="Barnes G."/>
            <person name="Brettin T.S."/>
            <person name="Dyer D.W."/>
            <person name="Inzana T.J."/>
        </authorList>
    </citation>
    <scope>NUCLEOTIDE SEQUENCE [LARGE SCALE GENOMIC DNA]</scope>
    <source>
        <strain>2336</strain>
    </source>
</reference>
<dbReference type="EMBL" id="CP000947">
    <property type="protein sequence ID" value="ACA30913.1"/>
    <property type="molecule type" value="Genomic_DNA"/>
</dbReference>
<dbReference type="RefSeq" id="WP_011608400.1">
    <property type="nucleotide sequence ID" value="NC_010519.1"/>
</dbReference>
<dbReference type="SMR" id="B0UVI0"/>
<dbReference type="STRING" id="228400.HSM_0119"/>
<dbReference type="GeneID" id="31486394"/>
<dbReference type="KEGG" id="hsm:HSM_0119"/>
<dbReference type="HOGENOM" id="CLU_095424_4_1_6"/>
<dbReference type="GO" id="GO:0022625">
    <property type="term" value="C:cytosolic large ribosomal subunit"/>
    <property type="evidence" value="ECO:0007669"/>
    <property type="project" value="TreeGrafter"/>
</dbReference>
<dbReference type="GO" id="GO:0003735">
    <property type="term" value="F:structural constituent of ribosome"/>
    <property type="evidence" value="ECO:0007669"/>
    <property type="project" value="InterPro"/>
</dbReference>
<dbReference type="GO" id="GO:0006412">
    <property type="term" value="P:translation"/>
    <property type="evidence" value="ECO:0007669"/>
    <property type="project" value="UniProtKB-UniRule"/>
</dbReference>
<dbReference type="FunFam" id="2.40.50.100:FF:000001">
    <property type="entry name" value="50S ribosomal protein L27"/>
    <property type="match status" value="1"/>
</dbReference>
<dbReference type="Gene3D" id="2.40.50.100">
    <property type="match status" value="1"/>
</dbReference>
<dbReference type="HAMAP" id="MF_00539">
    <property type="entry name" value="Ribosomal_bL27"/>
    <property type="match status" value="1"/>
</dbReference>
<dbReference type="InterPro" id="IPR001684">
    <property type="entry name" value="Ribosomal_bL27"/>
</dbReference>
<dbReference type="InterPro" id="IPR018261">
    <property type="entry name" value="Ribosomal_bL27_CS"/>
</dbReference>
<dbReference type="NCBIfam" id="TIGR00062">
    <property type="entry name" value="L27"/>
    <property type="match status" value="1"/>
</dbReference>
<dbReference type="PANTHER" id="PTHR15893:SF0">
    <property type="entry name" value="LARGE RIBOSOMAL SUBUNIT PROTEIN BL27M"/>
    <property type="match status" value="1"/>
</dbReference>
<dbReference type="PANTHER" id="PTHR15893">
    <property type="entry name" value="RIBOSOMAL PROTEIN L27"/>
    <property type="match status" value="1"/>
</dbReference>
<dbReference type="Pfam" id="PF01016">
    <property type="entry name" value="Ribosomal_L27"/>
    <property type="match status" value="1"/>
</dbReference>
<dbReference type="PRINTS" id="PR00063">
    <property type="entry name" value="RIBOSOMALL27"/>
</dbReference>
<dbReference type="SUPFAM" id="SSF110324">
    <property type="entry name" value="Ribosomal L27 protein-like"/>
    <property type="match status" value="1"/>
</dbReference>
<dbReference type="PROSITE" id="PS00831">
    <property type="entry name" value="RIBOSOMAL_L27"/>
    <property type="match status" value="1"/>
</dbReference>
<comment type="similarity">
    <text evidence="1">Belongs to the bacterial ribosomal protein bL27 family.</text>
</comment>
<evidence type="ECO:0000255" key="1">
    <source>
        <dbReference type="HAMAP-Rule" id="MF_00539"/>
    </source>
</evidence>
<evidence type="ECO:0000256" key="2">
    <source>
        <dbReference type="SAM" id="MobiDB-lite"/>
    </source>
</evidence>
<evidence type="ECO:0000305" key="3"/>
<feature type="chain" id="PRO_1000081893" description="Large ribosomal subunit protein bL27">
    <location>
        <begin position="1"/>
        <end position="85"/>
    </location>
</feature>
<feature type="region of interest" description="Disordered" evidence="2">
    <location>
        <begin position="1"/>
        <end position="20"/>
    </location>
</feature>
<gene>
    <name evidence="1" type="primary">rpmA</name>
    <name type="ordered locus">HSM_0119</name>
</gene>
<sequence length="85" mass="9040">MATKKAGGSTRNGRDSEAKRLGVKRFGGESVLAGSIIVRQRGTKFHAGSNVGMGKDHTLFATADGKVKFEVKGEKSRKYVSVVAE</sequence>
<organism>
    <name type="scientific">Histophilus somni (strain 2336)</name>
    <name type="common">Haemophilus somnus</name>
    <dbReference type="NCBI Taxonomy" id="228400"/>
    <lineage>
        <taxon>Bacteria</taxon>
        <taxon>Pseudomonadati</taxon>
        <taxon>Pseudomonadota</taxon>
        <taxon>Gammaproteobacteria</taxon>
        <taxon>Pasteurellales</taxon>
        <taxon>Pasteurellaceae</taxon>
        <taxon>Histophilus</taxon>
    </lineage>
</organism>
<name>RL27_HISS2</name>
<protein>
    <recommendedName>
        <fullName evidence="1">Large ribosomal subunit protein bL27</fullName>
    </recommendedName>
    <alternativeName>
        <fullName evidence="3">50S ribosomal protein L27</fullName>
    </alternativeName>
</protein>